<sequence length="278" mass="32514">MAGNFWQSSHYLQWILDKERQKDLKFLSEEEYWKLQIFFTNVIQALGEHLKLRQQVIATATVYFKRFYARYSLKSIDPVLMAPTCVFLASKVEEFGVVSNTSLIAATTSVLKTRFSYASPKEFPYRMNHILECEFYLLELMDCCLIVYHPYRPLLQYVQDMGQEDVLLPLAWRIVNDTYRTDLCLLYPPFMIALACLHVACVVQQKDARQWFAELSVDMEKILEIIRVILKLYEQWKNFDERKEMATILSKMPKPKPPPNSEGEQGPNGSQNSSYSQS</sequence>
<protein>
    <recommendedName>
        <fullName>Cyclin-C</fullName>
    </recommendedName>
</protein>
<reference key="1">
    <citation type="journal article" date="1993" name="Oncogene">
        <title>Cyclin G: a new mammalian cyclin with homology to fission yeast Cig1.</title>
        <authorList>
            <person name="Tamura K."/>
            <person name="Kanaoka Y."/>
            <person name="Jinno S."/>
            <person name="Nagata A."/>
            <person name="Ogiso Y."/>
            <person name="Shimizu K."/>
            <person name="Hayakawa T."/>
            <person name="Nojima H."/>
            <person name="Okayama H."/>
        </authorList>
    </citation>
    <scope>NUCLEOTIDE SEQUENCE [MRNA]</scope>
    <source>
        <tissue>Kidney</tissue>
    </source>
</reference>
<accession>P39947</accession>
<keyword id="KW-0010">Activator</keyword>
<keyword id="KW-0195">Cyclin</keyword>
<keyword id="KW-0539">Nucleus</keyword>
<keyword id="KW-0597">Phosphoprotein</keyword>
<keyword id="KW-1185">Reference proteome</keyword>
<keyword id="KW-0678">Repressor</keyword>
<keyword id="KW-0804">Transcription</keyword>
<keyword id="KW-0805">Transcription regulation</keyword>
<organism>
    <name type="scientific">Rattus norvegicus</name>
    <name type="common">Rat</name>
    <dbReference type="NCBI Taxonomy" id="10116"/>
    <lineage>
        <taxon>Eukaryota</taxon>
        <taxon>Metazoa</taxon>
        <taxon>Chordata</taxon>
        <taxon>Craniata</taxon>
        <taxon>Vertebrata</taxon>
        <taxon>Euteleostomi</taxon>
        <taxon>Mammalia</taxon>
        <taxon>Eutheria</taxon>
        <taxon>Euarchontoglires</taxon>
        <taxon>Glires</taxon>
        <taxon>Rodentia</taxon>
        <taxon>Myomorpha</taxon>
        <taxon>Muroidea</taxon>
        <taxon>Muridae</taxon>
        <taxon>Murinae</taxon>
        <taxon>Rattus</taxon>
    </lineage>
</organism>
<dbReference type="EMBL" id="D14013">
    <property type="protein sequence ID" value="BAA03114.1"/>
    <property type="status" value="ALT_INIT"/>
    <property type="molecule type" value="mRNA"/>
</dbReference>
<dbReference type="SMR" id="P39947"/>
<dbReference type="FunCoup" id="P39947">
    <property type="interactions" value="3333"/>
</dbReference>
<dbReference type="STRING" id="10116.ENSRNOP00000011442"/>
<dbReference type="PhosphoSitePlus" id="P39947"/>
<dbReference type="PaxDb" id="10116-ENSRNOP00000011442"/>
<dbReference type="UCSC" id="RGD:70905">
    <property type="organism name" value="rat"/>
</dbReference>
<dbReference type="AGR" id="RGD:70905"/>
<dbReference type="RGD" id="70905">
    <property type="gene designation" value="Ccnc"/>
</dbReference>
<dbReference type="eggNOG" id="KOG0794">
    <property type="taxonomic scope" value="Eukaryota"/>
</dbReference>
<dbReference type="InParanoid" id="P39947"/>
<dbReference type="Reactome" id="R-RNO-2173796">
    <property type="pathway name" value="SMAD2/SMAD3:SMAD4 heterotrimer regulates transcription"/>
</dbReference>
<dbReference type="Reactome" id="R-RNO-9841922">
    <property type="pathway name" value="MLL4 and MLL3 complexes regulate expression of PPARG target genes in adipogenesis and hepatic steatosis"/>
</dbReference>
<dbReference type="PRO" id="PR:P39947"/>
<dbReference type="Proteomes" id="UP000002494">
    <property type="component" value="Unplaced"/>
</dbReference>
<dbReference type="GO" id="GO:1990508">
    <property type="term" value="C:CKM complex"/>
    <property type="evidence" value="ECO:0000266"/>
    <property type="project" value="RGD"/>
</dbReference>
<dbReference type="GO" id="GO:0000307">
    <property type="term" value="C:cyclin-dependent protein kinase holoenzyme complex"/>
    <property type="evidence" value="ECO:0000266"/>
    <property type="project" value="RGD"/>
</dbReference>
<dbReference type="GO" id="GO:0016592">
    <property type="term" value="C:mediator complex"/>
    <property type="evidence" value="ECO:0000266"/>
    <property type="project" value="RGD"/>
</dbReference>
<dbReference type="GO" id="GO:0005634">
    <property type="term" value="C:nucleus"/>
    <property type="evidence" value="ECO:0000318"/>
    <property type="project" value="GO_Central"/>
</dbReference>
<dbReference type="GO" id="GO:0000151">
    <property type="term" value="C:ubiquitin ligase complex"/>
    <property type="evidence" value="ECO:0000314"/>
    <property type="project" value="RGD"/>
</dbReference>
<dbReference type="GO" id="GO:0016538">
    <property type="term" value="F:cyclin-dependent protein serine/threonine kinase regulator activity"/>
    <property type="evidence" value="ECO:0000318"/>
    <property type="project" value="GO_Central"/>
</dbReference>
<dbReference type="GO" id="GO:0042802">
    <property type="term" value="F:identical protein binding"/>
    <property type="evidence" value="ECO:0000266"/>
    <property type="project" value="RGD"/>
</dbReference>
<dbReference type="GO" id="GO:0045023">
    <property type="term" value="P:G0 to G1 transition"/>
    <property type="evidence" value="ECO:0000266"/>
    <property type="project" value="RGD"/>
</dbReference>
<dbReference type="GO" id="GO:0045746">
    <property type="term" value="P:negative regulation of Notch signaling pathway"/>
    <property type="evidence" value="ECO:0000266"/>
    <property type="project" value="RGD"/>
</dbReference>
<dbReference type="GO" id="GO:0090209">
    <property type="term" value="P:negative regulation of triglyceride metabolic process"/>
    <property type="evidence" value="ECO:0000315"/>
    <property type="project" value="RGD"/>
</dbReference>
<dbReference type="GO" id="GO:0045944">
    <property type="term" value="P:positive regulation of transcription by RNA polymerase II"/>
    <property type="evidence" value="ECO:0000266"/>
    <property type="project" value="RGD"/>
</dbReference>
<dbReference type="GO" id="GO:0016567">
    <property type="term" value="P:protein ubiquitination"/>
    <property type="evidence" value="ECO:0000314"/>
    <property type="project" value="RGD"/>
</dbReference>
<dbReference type="CDD" id="cd20513">
    <property type="entry name" value="CYCLIN_CCNC_rpt1"/>
    <property type="match status" value="1"/>
</dbReference>
<dbReference type="CDD" id="cd20514">
    <property type="entry name" value="CYCLIN_CCNC_rpt2"/>
    <property type="match status" value="1"/>
</dbReference>
<dbReference type="FunFam" id="1.10.472.10:FF:000015">
    <property type="entry name" value="Putative cyclin-c"/>
    <property type="match status" value="1"/>
</dbReference>
<dbReference type="Gene3D" id="1.10.472.10">
    <property type="entry name" value="Cyclin-like"/>
    <property type="match status" value="2"/>
</dbReference>
<dbReference type="InterPro" id="IPR013763">
    <property type="entry name" value="Cyclin-like_dom"/>
</dbReference>
<dbReference type="InterPro" id="IPR036915">
    <property type="entry name" value="Cyclin-like_sf"/>
</dbReference>
<dbReference type="InterPro" id="IPR043198">
    <property type="entry name" value="Cyclin/Ssn8"/>
</dbReference>
<dbReference type="InterPro" id="IPR031658">
    <property type="entry name" value="Cyclin_C_2"/>
</dbReference>
<dbReference type="InterPro" id="IPR006671">
    <property type="entry name" value="Cyclin_N"/>
</dbReference>
<dbReference type="PANTHER" id="PTHR10026">
    <property type="entry name" value="CYCLIN"/>
    <property type="match status" value="1"/>
</dbReference>
<dbReference type="Pfam" id="PF16899">
    <property type="entry name" value="Cyclin_C_2"/>
    <property type="match status" value="1"/>
</dbReference>
<dbReference type="Pfam" id="PF00134">
    <property type="entry name" value="Cyclin_N"/>
    <property type="match status" value="1"/>
</dbReference>
<dbReference type="PIRSF" id="PIRSF028758">
    <property type="entry name" value="Cyclin, C/H/G types"/>
    <property type="match status" value="1"/>
</dbReference>
<dbReference type="SMART" id="SM00385">
    <property type="entry name" value="CYCLIN"/>
    <property type="match status" value="2"/>
</dbReference>
<dbReference type="SUPFAM" id="SSF47954">
    <property type="entry name" value="Cyclin-like"/>
    <property type="match status" value="2"/>
</dbReference>
<feature type="chain" id="PRO_0000080422" description="Cyclin-C">
    <location>
        <begin position="1"/>
        <end position="278"/>
    </location>
</feature>
<feature type="domain" description="Cyclin N-terminal">
    <location>
        <begin position="41"/>
        <end position="139"/>
    </location>
</feature>
<feature type="region of interest" description="Disordered" evidence="3">
    <location>
        <begin position="247"/>
        <end position="278"/>
    </location>
</feature>
<feature type="compositionally biased region" description="Polar residues" evidence="3">
    <location>
        <begin position="267"/>
        <end position="278"/>
    </location>
</feature>
<feature type="modified residue" description="Phosphoserine" evidence="2">
    <location>
        <position position="270"/>
    </location>
</feature>
<evidence type="ECO:0000250" key="1"/>
<evidence type="ECO:0000250" key="2">
    <source>
        <dbReference type="UniProtKB" id="P24863"/>
    </source>
</evidence>
<evidence type="ECO:0000256" key="3">
    <source>
        <dbReference type="SAM" id="MobiDB-lite"/>
    </source>
</evidence>
<evidence type="ECO:0000305" key="4"/>
<comment type="function">
    <text evidence="1">Component of the Mediator complex, a coactivator involved in regulated gene transcription of nearly all RNA polymerase II-dependent genes. Mediator functions as a bridge to convey information from gene-specific regulatory proteins to the basal RNA polymerase II transcription machinery. Mediator is recruited to promoters by direct interactions with regulatory proteins and serves as a scaffold for the assembly of a functional preinitiation complex with RNA polymerase II and the general transcription factors. Binds to and activates cyclin-dependent kinase CDK8 that phosphorylates the CTD (C-terminal domain) of the large subunit of RNA polymerase II (RNAp II), which may inhibit the formation of a transcription initiation complex (By similarity).</text>
</comment>
<comment type="subunit">
    <text evidence="1">Component of the Mediator complex, which is composed of MED1, MED4, MED6, MED7, MED8, MED9, MED10, MED11, MED12, MED13, MED13L, MED14, MED15, MED16, MED17, MED18, MED19, MED20, MED21, MED22, MED23, MED24, MED25, MED26, MED27, MED29, MED30, MED31, CCNC, CDK8 and CDC2L6/CDK11. The MED12, MED13, CCNC and CDK8 subunits form a distinct module termed the CDK8 module. Mediator containing the CDK8 module is less active than Mediator lacking this module in supporting transcriptional activation. Individual preparations of the Mediator complex lacking one or more distinct subunits have been variously termed ARC, CRSP, DRIP, PC2, SMCC and TRAP. The cylin/CDK pair formed by CCNC/CDK8 also associates with the large subunit of RNA polymerase II (By similarity).</text>
</comment>
<comment type="subcellular location">
    <subcellularLocation>
        <location evidence="4">Nucleus</location>
    </subcellularLocation>
</comment>
<comment type="similarity">
    <text evidence="4">Belongs to the cyclin family. Cyclin C subfamily.</text>
</comment>
<comment type="sequence caution" evidence="4">
    <conflict type="erroneous initiation">
        <sequence resource="EMBL-CDS" id="BAA03114"/>
    </conflict>
</comment>
<proteinExistence type="evidence at transcript level"/>
<name>CCNC_RAT</name>
<gene>
    <name type="primary">Ccnc</name>
</gene>